<keyword id="KW-0067">ATP-binding</keyword>
<keyword id="KW-0997">Cell inner membrane</keyword>
<keyword id="KW-1003">Cell membrane</keyword>
<keyword id="KW-0472">Membrane</keyword>
<keyword id="KW-0547">Nucleotide-binding</keyword>
<keyword id="KW-1278">Translocase</keyword>
<keyword id="KW-0813">Transport</keyword>
<feature type="chain" id="PRO_0000269599" description="Hemin import ATP-binding protein HmuV">
    <location>
        <begin position="1"/>
        <end position="265"/>
    </location>
</feature>
<feature type="domain" description="ABC transporter" evidence="1">
    <location>
        <begin position="13"/>
        <end position="249"/>
    </location>
</feature>
<feature type="binding site" evidence="1">
    <location>
        <begin position="45"/>
        <end position="52"/>
    </location>
    <ligand>
        <name>ATP</name>
        <dbReference type="ChEBI" id="CHEBI:30616"/>
    </ligand>
</feature>
<reference key="1">
    <citation type="journal article" date="2005" name="Arch. Microbiol.">
        <title>Heme uptake genes in human and fish isolates of Photobacterium damselae: existence of hutA pseudogenes.</title>
        <authorList>
            <person name="Juiz-Rio S."/>
            <person name="Osorio C.R."/>
            <person name="Lemos M.L."/>
        </authorList>
    </citation>
    <scope>NUCLEOTIDE SEQUENCE [GENOMIC DNA]</scope>
    <source>
        <strain>CDC 2227-81</strain>
    </source>
</reference>
<dbReference type="EC" id="7.6.2.-" evidence="1"/>
<dbReference type="EMBL" id="AJ830893">
    <property type="protein sequence ID" value="CAH33823.1"/>
    <property type="molecule type" value="Genomic_DNA"/>
</dbReference>
<dbReference type="RefSeq" id="WP_151183146.1">
    <property type="nucleotide sequence ID" value="NZ_VZUQ01000082.1"/>
</dbReference>
<dbReference type="SMR" id="Q659V4"/>
<dbReference type="STRING" id="85581.CAY62_05855"/>
<dbReference type="GO" id="GO:0005886">
    <property type="term" value="C:plasma membrane"/>
    <property type="evidence" value="ECO:0007669"/>
    <property type="project" value="UniProtKB-SubCell"/>
</dbReference>
<dbReference type="GO" id="GO:0005524">
    <property type="term" value="F:ATP binding"/>
    <property type="evidence" value="ECO:0007669"/>
    <property type="project" value="UniProtKB-KW"/>
</dbReference>
<dbReference type="GO" id="GO:0016887">
    <property type="term" value="F:ATP hydrolysis activity"/>
    <property type="evidence" value="ECO:0007669"/>
    <property type="project" value="InterPro"/>
</dbReference>
<dbReference type="CDD" id="cd03214">
    <property type="entry name" value="ABC_Iron-Siderophores_B12_Hemin"/>
    <property type="match status" value="1"/>
</dbReference>
<dbReference type="FunFam" id="3.40.50.300:FF:000134">
    <property type="entry name" value="Iron-enterobactin ABC transporter ATP-binding protein"/>
    <property type="match status" value="1"/>
</dbReference>
<dbReference type="Gene3D" id="3.40.50.300">
    <property type="entry name" value="P-loop containing nucleotide triphosphate hydrolases"/>
    <property type="match status" value="1"/>
</dbReference>
<dbReference type="InterPro" id="IPR003593">
    <property type="entry name" value="AAA+_ATPase"/>
</dbReference>
<dbReference type="InterPro" id="IPR003439">
    <property type="entry name" value="ABC_transporter-like_ATP-bd"/>
</dbReference>
<dbReference type="InterPro" id="IPR027417">
    <property type="entry name" value="P-loop_NTPase"/>
</dbReference>
<dbReference type="NCBIfam" id="NF010068">
    <property type="entry name" value="PRK13548.1"/>
    <property type="match status" value="1"/>
</dbReference>
<dbReference type="PANTHER" id="PTHR42794">
    <property type="entry name" value="HEMIN IMPORT ATP-BINDING PROTEIN HMUV"/>
    <property type="match status" value="1"/>
</dbReference>
<dbReference type="PANTHER" id="PTHR42794:SF1">
    <property type="entry name" value="HEMIN IMPORT ATP-BINDING PROTEIN HMUV"/>
    <property type="match status" value="1"/>
</dbReference>
<dbReference type="Pfam" id="PF00005">
    <property type="entry name" value="ABC_tran"/>
    <property type="match status" value="1"/>
</dbReference>
<dbReference type="SMART" id="SM00382">
    <property type="entry name" value="AAA"/>
    <property type="match status" value="1"/>
</dbReference>
<dbReference type="SUPFAM" id="SSF52540">
    <property type="entry name" value="P-loop containing nucleoside triphosphate hydrolases"/>
    <property type="match status" value="1"/>
</dbReference>
<dbReference type="PROSITE" id="PS50893">
    <property type="entry name" value="ABC_TRANSPORTER_2"/>
    <property type="match status" value="1"/>
</dbReference>
<dbReference type="PROSITE" id="PS51261">
    <property type="entry name" value="HMUV"/>
    <property type="match status" value="1"/>
</dbReference>
<comment type="function">
    <text evidence="1">Part of the ABC transporter complex HmuTUV involved in hemin import. Responsible for energy coupling to the transport system.</text>
</comment>
<comment type="subunit">
    <text evidence="1">The complex is composed of two ATP-binding proteins (HmuV), two transmembrane proteins (HmuU) and a solute-binding protein (HmuT).</text>
</comment>
<comment type="subcellular location">
    <subcellularLocation>
        <location evidence="1">Cell inner membrane</location>
        <topology evidence="1">Peripheral membrane protein</topology>
    </subcellularLocation>
</comment>
<comment type="similarity">
    <text evidence="1">Belongs to the ABC transporter superfamily. Heme (hemin) importer (TC 3.A.1.14.5) family.</text>
</comment>
<accession>Q659V4</accession>
<gene>
    <name evidence="1" type="primary">hmuV</name>
    <name type="synonym">hutD</name>
</gene>
<organism>
    <name type="scientific">Photobacterium damselae subsp. damselae</name>
    <name type="common">Listonella damsela</name>
    <dbReference type="NCBI Taxonomy" id="85581"/>
    <lineage>
        <taxon>Bacteria</taxon>
        <taxon>Pseudomonadati</taxon>
        <taxon>Pseudomonadota</taxon>
        <taxon>Gammaproteobacteria</taxon>
        <taxon>Vibrionales</taxon>
        <taxon>Vibrionaceae</taxon>
        <taxon>Photobacterium</taxon>
    </lineage>
</organism>
<name>HMUV_PHODD</name>
<protein>
    <recommendedName>
        <fullName evidence="1">Hemin import ATP-binding protein HmuV</fullName>
        <ecNumber evidence="1">7.6.2.-</ecNumber>
    </recommendedName>
</protein>
<sequence length="265" mass="28634">MSSTLSSHHAIALKASNLHLQLGGKTLLDNVDLEIMSGQITALLGPNGAGKSSLLKVLNGEIKPNSGSIEIFSRPKDHWPSELLAKHMGILPQHSTLSFSFLAHEVAELGAMPLAISNHQAQQLAAKNMVKVGVDHLANRLYPTLSGGEKQRVHFARVLTQLSHSGKQCILMLDEPTSALDLAHQHHTLEIAQALSQQGAAVIIVIHDLNLAAQYADRLIILNQGKIQADGTPWQVLTPTAVENVYGWPVQVIAHPEHNYPVILA</sequence>
<proteinExistence type="inferred from homology"/>
<evidence type="ECO:0000255" key="1">
    <source>
        <dbReference type="HAMAP-Rule" id="MF_01718"/>
    </source>
</evidence>